<reference key="1">
    <citation type="journal article" date="1988" name="J. Gen. Virol.">
        <title>Typing hepatitis B virus by homology in nucleotide sequence: comparison of surface antigen subtypes.</title>
        <authorList>
            <person name="Okamoto H."/>
            <person name="Tsuda F."/>
            <person name="Sakugawa H."/>
            <person name="Sastrosoewignjo R.I."/>
            <person name="Imai M."/>
            <person name="Miyakawa Y."/>
            <person name="Mayumi M."/>
        </authorList>
    </citation>
    <scope>NUCLEOTIDE SEQUENCE [GENOMIC DNA]</scope>
</reference>
<reference key="2">
    <citation type="journal article" date="2007" name="World J. Gastroenterol.">
        <title>Hepatitis B virus replication.</title>
        <authorList>
            <person name="Beck J."/>
            <person name="Nassal M."/>
        </authorList>
    </citation>
    <scope>REVIEW</scope>
</reference>
<name>DPOL_HBVD4</name>
<organismHost>
    <name type="scientific">Homo sapiens</name>
    <name type="common">Human</name>
    <dbReference type="NCBI Taxonomy" id="9606"/>
</organismHost>
<organismHost>
    <name type="scientific">Pan troglodytes</name>
    <name type="common">Chimpanzee</name>
    <dbReference type="NCBI Taxonomy" id="9598"/>
</organismHost>
<protein>
    <recommendedName>
        <fullName evidence="1">Protein P</fullName>
    </recommendedName>
    <domain>
        <recommendedName>
            <fullName evidence="1">DNA-directed DNA polymerase</fullName>
            <ecNumber evidence="1">2.7.7.7</ecNumber>
        </recommendedName>
    </domain>
    <domain>
        <recommendedName>
            <fullName evidence="1">RNA-directed DNA polymerase</fullName>
            <ecNumber evidence="1">2.7.7.49</ecNumber>
        </recommendedName>
    </domain>
    <domain>
        <recommendedName>
            <fullName evidence="1">Ribonuclease H</fullName>
            <ecNumber evidence="1">3.1.26.4</ecNumber>
        </recommendedName>
    </domain>
</protein>
<keyword id="KW-0235">DNA replication</keyword>
<keyword id="KW-0238">DNA-binding</keyword>
<keyword id="KW-0239">DNA-directed DNA polymerase</keyword>
<keyword id="KW-0255">Endonuclease</keyword>
<keyword id="KW-0945">Host-virus interaction</keyword>
<keyword id="KW-0378">Hydrolase</keyword>
<keyword id="KW-1090">Inhibition of host innate immune response by virus</keyword>
<keyword id="KW-1113">Inhibition of host RLR pathway by virus</keyword>
<keyword id="KW-0460">Magnesium</keyword>
<keyword id="KW-0479">Metal-binding</keyword>
<keyword id="KW-0511">Multifunctional enzyme</keyword>
<keyword id="KW-0540">Nuclease</keyword>
<keyword id="KW-0548">Nucleotidyltransferase</keyword>
<keyword id="KW-1185">Reference proteome</keyword>
<keyword id="KW-0695">RNA-directed DNA polymerase</keyword>
<keyword id="KW-0808">Transferase</keyword>
<keyword id="KW-0899">Viral immunoevasion</keyword>
<feature type="chain" id="PRO_0000323266" description="Protein P">
    <location>
        <begin position="1"/>
        <end position="832"/>
    </location>
</feature>
<feature type="domain" description="Reverse transcriptase" evidence="1">
    <location>
        <begin position="346"/>
        <end position="589"/>
    </location>
</feature>
<feature type="region of interest" description="Terminal protein domain (TP)" evidence="1">
    <location>
        <begin position="1"/>
        <end position="177"/>
    </location>
</feature>
<feature type="region of interest" description="Spacer" evidence="1">
    <location>
        <begin position="178"/>
        <end position="335"/>
    </location>
</feature>
<feature type="region of interest" description="Disordered" evidence="2">
    <location>
        <begin position="186"/>
        <end position="229"/>
    </location>
</feature>
<feature type="region of interest" description="Disordered" evidence="2">
    <location>
        <begin position="275"/>
        <end position="305"/>
    </location>
</feature>
<feature type="region of interest" description="Polymerase/reverse transcriptase domain (RT)" evidence="1">
    <location>
        <begin position="336"/>
        <end position="679"/>
    </location>
</feature>
<feature type="binding site" evidence="1">
    <location>
        <position position="418"/>
    </location>
    <ligand>
        <name>Mg(2+)</name>
        <dbReference type="ChEBI" id="CHEBI:18420"/>
        <note>catalytic</note>
    </ligand>
</feature>
<feature type="binding site" evidence="1">
    <location>
        <position position="540"/>
    </location>
    <ligand>
        <name>Mg(2+)</name>
        <dbReference type="ChEBI" id="CHEBI:18420"/>
        <note>catalytic</note>
    </ligand>
</feature>
<feature type="binding site" evidence="1">
    <location>
        <position position="541"/>
    </location>
    <ligand>
        <name>Mg(2+)</name>
        <dbReference type="ChEBI" id="CHEBI:18420"/>
        <note>catalytic</note>
    </ligand>
</feature>
<feature type="site" description="Priming of reverse-transcription by covalently linking the first nucleotide of the (-)DNA" evidence="1">
    <location>
        <position position="63"/>
    </location>
</feature>
<evidence type="ECO:0000255" key="1">
    <source>
        <dbReference type="HAMAP-Rule" id="MF_04073"/>
    </source>
</evidence>
<evidence type="ECO:0000256" key="2">
    <source>
        <dbReference type="SAM" id="MobiDB-lite"/>
    </source>
</evidence>
<comment type="function">
    <text evidence="1">Multifunctional enzyme that converts the viral RNA genome into dsDNA in viral cytoplasmic capsids. This enzyme displays a DNA polymerase activity that can copy either DNA or RNA templates, and a ribonuclease H (RNase H) activity that cleaves the RNA strand of RNA-DNA heteroduplexes in a partially processive 3'- to 5'-endonucleasic mode. Neo-synthesized pregenomic RNA (pgRNA) are encapsidated together with the P protein, and reverse-transcribed inside the nucleocapsid. Initiation of reverse-transcription occurs first by binding the epsilon loop on the pgRNA genome, and is initiated by protein priming, thereby the 5'-end of (-)DNA is covalently linked to P protein. Partial (+)DNA is synthesized from the (-)DNA template and generates the relaxed circular DNA (RC-DNA) genome. After budding and infection, the RC-DNA migrates in the nucleus, and is converted into a plasmid-like covalently closed circular DNA (cccDNA). The activity of P protein does not seem to be necessary for cccDNA generation, and is presumably released from (+)DNA by host nuclear DNA repair machinery.</text>
</comment>
<comment type="catalytic activity">
    <reaction evidence="1">
        <text>DNA(n) + a 2'-deoxyribonucleoside 5'-triphosphate = DNA(n+1) + diphosphate</text>
        <dbReference type="Rhea" id="RHEA:22508"/>
        <dbReference type="Rhea" id="RHEA-COMP:17339"/>
        <dbReference type="Rhea" id="RHEA-COMP:17340"/>
        <dbReference type="ChEBI" id="CHEBI:33019"/>
        <dbReference type="ChEBI" id="CHEBI:61560"/>
        <dbReference type="ChEBI" id="CHEBI:173112"/>
        <dbReference type="EC" id="2.7.7.7"/>
    </reaction>
</comment>
<comment type="catalytic activity">
    <reaction evidence="1">
        <text>DNA(n) + a 2'-deoxyribonucleoside 5'-triphosphate = DNA(n+1) + diphosphate</text>
        <dbReference type="Rhea" id="RHEA:22508"/>
        <dbReference type="Rhea" id="RHEA-COMP:17339"/>
        <dbReference type="Rhea" id="RHEA-COMP:17340"/>
        <dbReference type="ChEBI" id="CHEBI:33019"/>
        <dbReference type="ChEBI" id="CHEBI:61560"/>
        <dbReference type="ChEBI" id="CHEBI:173112"/>
        <dbReference type="EC" id="2.7.7.49"/>
    </reaction>
</comment>
<comment type="catalytic activity">
    <reaction evidence="1">
        <text>Endonucleolytic cleavage to 5'-phosphomonoester.</text>
        <dbReference type="EC" id="3.1.26.4"/>
    </reaction>
</comment>
<comment type="activity regulation">
    <text evidence="1">Activated by host HSP70 and HSP40 in vitro to be able to bind the epsilon loop of the pgRNA. Because deletion of the RNase H region renders the protein partly chaperone-independent, the chaperones may be needed indirectly to relieve occlusion of the RNA-binding site by this domain. Inhibited by several reverse-transcriptase inhibitors: Lamivudine, Adefovir and Entecavir.</text>
</comment>
<comment type="domain">
    <text evidence="1">Terminal protein domain (TP) is hepadnavirus-specific. Spacer domain is highly variable and separates the TP and RT domains. Polymerase/reverse-transcriptase domain (RT) and ribonuclease H domain (RH) are similar to retrovirus reverse transcriptase/RNase H.</text>
</comment>
<comment type="domain">
    <text evidence="1">The polymerase/reverse transcriptase (RT) and ribonuclease H (RH) domains are structured in five subdomains: finger, palm, thumb, connection and RNase H. Within the palm subdomain, the 'primer grip' region is thought to be involved in the positioning of the primer terminus for accommodating the incoming nucleotide. The RH domain stabilizes the association of RT with primer-template.</text>
</comment>
<comment type="miscellaneous">
    <text evidence="1">Hepadnaviral virions contain probably just one P protein molecule per particle.</text>
</comment>
<comment type="similarity">
    <text evidence="1">Belongs to the hepadnaviridae P protein family.</text>
</comment>
<sequence length="832" mass="93887">MPLSYQHFRRLLLLDDEAGPLEEELPRLADEGLNRRVAEDLNLGNLNVSIPWTHKVGNFTGLYSSSVPVFNPHWKTPTFPNIHLHQDIINKCEQFVGPLTVNEKRRLQLIMPARFYPNFTKYLPLDKGIKPYYPEHLVNHYFQTRHYLHTLWKAGILYKRETTHSASFCGSPYSWEQKLQHGAESFHQQSPGILSRPPVGSSLQSKHQKSRLGLQSQQGHLARRQQGRSWSIRARVHPTARRPFGVEPAGSGHTTNFASKSASCSYQSPVRKAAYPTVSTSKRRSSSGHAVDFHNLPPSSARSQSERPVFPCWWLQFRNSKPCSDYCLSHIVNLLEDWGPCTEHGEHHIRIPRTPARVTGGVFLVDKNPHNTAESRLVVDFSQFSRGNYRVSWPKFAVPNLQSLTNLLSSNLSWLSLDVSAAFYHLPLHPAAMPHLLVGSSGLSRYVARLSSNSRIFDHQHGTMQNLHDYCSRNLYVSLLLLYQTFGRKLHLYSHPIILGFRKIPMGVGLSPFLLAQFTSAICSVVRRAFPHCLAFSYMDDVVLGAKSVQHLESLFTAVTNFLLSLGIHLNPNKTKRWGYSLHFMGYVIGSWGSLPQDHIVHKLKECFRKLPVNRPIDWKVCQRIVGLLGFAAPFTQCGYPALMPLYACIQSKQAFTFSPTYKAFLYKQYMNLYPVARQRSGLCQVFADATPTGWGLAMGHQRMRGTFQAPLPIHTAELLAACFARSRSGANILGTDNSVVLSRKYTSFPWLLGCAANWILRGTSFVYVPSALNPADDPSRGRLGLCRPLLRLPFRPTTGRTSLYAVSPSVPSHLPDHVHFASPLHVAWRPP</sequence>
<accession>Q9QMI1</accession>
<organism>
    <name type="scientific">Hepatitis B virus genotype D subtype ayw (isolate Japan/JYW796/1988)</name>
    <name type="common">HBV-D</name>
    <dbReference type="NCBI Taxonomy" id="489487"/>
    <lineage>
        <taxon>Viruses</taxon>
        <taxon>Riboviria</taxon>
        <taxon>Pararnavirae</taxon>
        <taxon>Artverviricota</taxon>
        <taxon>Revtraviricetes</taxon>
        <taxon>Blubervirales</taxon>
        <taxon>Hepadnaviridae</taxon>
        <taxon>Orthohepadnavirus</taxon>
        <taxon>Hepatitis B virus</taxon>
        <taxon>hepatitis B virus genotype D</taxon>
    </lineage>
</organism>
<gene>
    <name evidence="1" type="primary">P</name>
</gene>
<dbReference type="EC" id="2.7.7.7" evidence="1"/>
<dbReference type="EC" id="2.7.7.49" evidence="1"/>
<dbReference type="EC" id="3.1.26.4" evidence="1"/>
<dbReference type="EMBL" id="AB033558">
    <property type="protein sequence ID" value="BAA85373.1"/>
    <property type="molecule type" value="Genomic_DNA"/>
</dbReference>
<dbReference type="Proteomes" id="UP000007931">
    <property type="component" value="Genome"/>
</dbReference>
<dbReference type="GO" id="GO:0003677">
    <property type="term" value="F:DNA binding"/>
    <property type="evidence" value="ECO:0007669"/>
    <property type="project" value="UniProtKB-UniRule"/>
</dbReference>
<dbReference type="GO" id="GO:0003887">
    <property type="term" value="F:DNA-directed DNA polymerase activity"/>
    <property type="evidence" value="ECO:0007669"/>
    <property type="project" value="UniProtKB-UniRule"/>
</dbReference>
<dbReference type="GO" id="GO:0046872">
    <property type="term" value="F:metal ion binding"/>
    <property type="evidence" value="ECO:0007669"/>
    <property type="project" value="UniProtKB-UniRule"/>
</dbReference>
<dbReference type="GO" id="GO:0003964">
    <property type="term" value="F:RNA-directed DNA polymerase activity"/>
    <property type="evidence" value="ECO:0007669"/>
    <property type="project" value="UniProtKB-UniRule"/>
</dbReference>
<dbReference type="GO" id="GO:0004523">
    <property type="term" value="F:RNA-DNA hybrid ribonuclease activity"/>
    <property type="evidence" value="ECO:0007669"/>
    <property type="project" value="UniProtKB-UniRule"/>
</dbReference>
<dbReference type="GO" id="GO:0006260">
    <property type="term" value="P:DNA replication"/>
    <property type="evidence" value="ECO:0007669"/>
    <property type="project" value="UniProtKB-UniRule"/>
</dbReference>
<dbReference type="GO" id="GO:0052170">
    <property type="term" value="P:symbiont-mediated suppression of host innate immune response"/>
    <property type="evidence" value="ECO:0007669"/>
    <property type="project" value="UniProtKB-UniRule"/>
</dbReference>
<dbReference type="FunFam" id="3.30.70.270:FF:000009">
    <property type="entry name" value="Protein P"/>
    <property type="match status" value="1"/>
</dbReference>
<dbReference type="Gene3D" id="3.30.70.270">
    <property type="match status" value="1"/>
</dbReference>
<dbReference type="HAMAP" id="MF_04073">
    <property type="entry name" value="HBV_DPOL"/>
    <property type="match status" value="1"/>
</dbReference>
<dbReference type="InterPro" id="IPR043502">
    <property type="entry name" value="DNA/RNA_pol_sf"/>
</dbReference>
<dbReference type="InterPro" id="IPR001462">
    <property type="entry name" value="DNApol_viral_C"/>
</dbReference>
<dbReference type="InterPro" id="IPR000201">
    <property type="entry name" value="DNApol_viral_N"/>
</dbReference>
<dbReference type="InterPro" id="IPR037531">
    <property type="entry name" value="HBV_DPOL"/>
</dbReference>
<dbReference type="InterPro" id="IPR043128">
    <property type="entry name" value="Rev_trsase/Diguanyl_cyclase"/>
</dbReference>
<dbReference type="InterPro" id="IPR000477">
    <property type="entry name" value="RT_dom"/>
</dbReference>
<dbReference type="InterPro" id="IPR051320">
    <property type="entry name" value="Viral_Replic_Matur_Polypro"/>
</dbReference>
<dbReference type="PANTHER" id="PTHR33064">
    <property type="entry name" value="POL PROTEIN"/>
    <property type="match status" value="1"/>
</dbReference>
<dbReference type="PANTHER" id="PTHR33064:SF37">
    <property type="entry name" value="RIBONUCLEASE H"/>
    <property type="match status" value="1"/>
</dbReference>
<dbReference type="Pfam" id="PF00336">
    <property type="entry name" value="DNA_pol_viral_C"/>
    <property type="match status" value="1"/>
</dbReference>
<dbReference type="Pfam" id="PF00242">
    <property type="entry name" value="DNA_pol_viral_N"/>
    <property type="match status" value="1"/>
</dbReference>
<dbReference type="Pfam" id="PF00078">
    <property type="entry name" value="RVT_1"/>
    <property type="match status" value="1"/>
</dbReference>
<dbReference type="SUPFAM" id="SSF56672">
    <property type="entry name" value="DNA/RNA polymerases"/>
    <property type="match status" value="1"/>
</dbReference>
<dbReference type="PROSITE" id="PS50878">
    <property type="entry name" value="RT_POL"/>
    <property type="match status" value="1"/>
</dbReference>
<proteinExistence type="inferred from homology"/>